<sequence>MISWISGELVELWQTNQKFFLLINCQGLGYEIQVLESLFLKLKTNQITNKNITLWIKHIKKEDSDLLFGFSSKDQKNFFIEILNIRGVGSQIGMGILSKFSISEVINAINTQNKKLICSVPGIGQKMSERLILELKSKFRNELKIQEEKSKDEFHIKDNKINKIVSDIELTLKSLNYTKNEIKSILPIISKEIDSLTKKEKDTSFENLLMLAMNYLDNDSSNIVR</sequence>
<gene>
    <name evidence="1" type="primary">ruvA</name>
    <name type="ordered locus">PMT9312_0857</name>
</gene>
<reference key="1">
    <citation type="journal article" date="2006" name="Science">
        <title>Genomic islands and the ecology and evolution of Prochlorococcus.</title>
        <authorList>
            <person name="Coleman M.L."/>
            <person name="Sullivan M.B."/>
            <person name="Martiny A.C."/>
            <person name="Steglich C."/>
            <person name="Barry K."/>
            <person name="Delong E.F."/>
            <person name="Chisholm S.W."/>
        </authorList>
    </citation>
    <scope>NUCLEOTIDE SEQUENCE [LARGE SCALE GENOMIC DNA]</scope>
    <source>
        <strain>MIT 9312</strain>
    </source>
</reference>
<feature type="chain" id="PRO_1000002514" description="Holliday junction branch migration complex subunit RuvA">
    <location>
        <begin position="1"/>
        <end position="225"/>
    </location>
</feature>
<feature type="region of interest" description="Domain I" evidence="1">
    <location>
        <begin position="1"/>
        <end position="71"/>
    </location>
</feature>
<feature type="region of interest" description="Domain II" evidence="1">
    <location>
        <begin position="72"/>
        <end position="150"/>
    </location>
</feature>
<feature type="region of interest" description="Flexible linker" evidence="1">
    <location>
        <begin position="151"/>
        <end position="161"/>
    </location>
</feature>
<feature type="region of interest" description="Domain III" evidence="1">
    <location>
        <begin position="161"/>
        <end position="225"/>
    </location>
</feature>
<dbReference type="EMBL" id="CP000111">
    <property type="protein sequence ID" value="ABB49917.1"/>
    <property type="molecule type" value="Genomic_DNA"/>
</dbReference>
<dbReference type="RefSeq" id="WP_011376412.1">
    <property type="nucleotide sequence ID" value="NC_007577.1"/>
</dbReference>
<dbReference type="SMR" id="Q31B28"/>
<dbReference type="STRING" id="74546.PMT9312_0857"/>
<dbReference type="KEGG" id="pmi:PMT9312_0857"/>
<dbReference type="eggNOG" id="COG0632">
    <property type="taxonomic scope" value="Bacteria"/>
</dbReference>
<dbReference type="HOGENOM" id="CLU_087936_0_0_3"/>
<dbReference type="OrthoDB" id="5293449at2"/>
<dbReference type="Proteomes" id="UP000002715">
    <property type="component" value="Chromosome"/>
</dbReference>
<dbReference type="GO" id="GO:0005737">
    <property type="term" value="C:cytoplasm"/>
    <property type="evidence" value="ECO:0007669"/>
    <property type="project" value="UniProtKB-SubCell"/>
</dbReference>
<dbReference type="GO" id="GO:0048476">
    <property type="term" value="C:Holliday junction resolvase complex"/>
    <property type="evidence" value="ECO:0007669"/>
    <property type="project" value="UniProtKB-UniRule"/>
</dbReference>
<dbReference type="GO" id="GO:0005524">
    <property type="term" value="F:ATP binding"/>
    <property type="evidence" value="ECO:0007669"/>
    <property type="project" value="InterPro"/>
</dbReference>
<dbReference type="GO" id="GO:0000400">
    <property type="term" value="F:four-way junction DNA binding"/>
    <property type="evidence" value="ECO:0007669"/>
    <property type="project" value="UniProtKB-UniRule"/>
</dbReference>
<dbReference type="GO" id="GO:0009378">
    <property type="term" value="F:four-way junction helicase activity"/>
    <property type="evidence" value="ECO:0007669"/>
    <property type="project" value="InterPro"/>
</dbReference>
<dbReference type="GO" id="GO:0006310">
    <property type="term" value="P:DNA recombination"/>
    <property type="evidence" value="ECO:0007669"/>
    <property type="project" value="UniProtKB-UniRule"/>
</dbReference>
<dbReference type="GO" id="GO:0006281">
    <property type="term" value="P:DNA repair"/>
    <property type="evidence" value="ECO:0007669"/>
    <property type="project" value="UniProtKB-UniRule"/>
</dbReference>
<dbReference type="Gene3D" id="1.10.150.20">
    <property type="entry name" value="5' to 3' exonuclease, C-terminal subdomain"/>
    <property type="match status" value="1"/>
</dbReference>
<dbReference type="Gene3D" id="2.40.50.140">
    <property type="entry name" value="Nucleic acid-binding proteins"/>
    <property type="match status" value="1"/>
</dbReference>
<dbReference type="HAMAP" id="MF_00031">
    <property type="entry name" value="DNA_HJ_migration_RuvA"/>
    <property type="match status" value="1"/>
</dbReference>
<dbReference type="InterPro" id="IPR013849">
    <property type="entry name" value="DNA_helicase_Holl-junc_RuvA_I"/>
</dbReference>
<dbReference type="InterPro" id="IPR012340">
    <property type="entry name" value="NA-bd_OB-fold"/>
</dbReference>
<dbReference type="InterPro" id="IPR000085">
    <property type="entry name" value="RuvA"/>
</dbReference>
<dbReference type="InterPro" id="IPR010994">
    <property type="entry name" value="RuvA_2-like"/>
</dbReference>
<dbReference type="NCBIfam" id="TIGR00084">
    <property type="entry name" value="ruvA"/>
    <property type="match status" value="1"/>
</dbReference>
<dbReference type="Pfam" id="PF14520">
    <property type="entry name" value="HHH_5"/>
    <property type="match status" value="1"/>
</dbReference>
<dbReference type="Pfam" id="PF01330">
    <property type="entry name" value="RuvA_N"/>
    <property type="match status" value="1"/>
</dbReference>
<dbReference type="SUPFAM" id="SSF50249">
    <property type="entry name" value="Nucleic acid-binding proteins"/>
    <property type="match status" value="1"/>
</dbReference>
<dbReference type="SUPFAM" id="SSF47781">
    <property type="entry name" value="RuvA domain 2-like"/>
    <property type="match status" value="1"/>
</dbReference>
<organism>
    <name type="scientific">Prochlorococcus marinus (strain MIT 9312)</name>
    <dbReference type="NCBI Taxonomy" id="74546"/>
    <lineage>
        <taxon>Bacteria</taxon>
        <taxon>Bacillati</taxon>
        <taxon>Cyanobacteriota</taxon>
        <taxon>Cyanophyceae</taxon>
        <taxon>Synechococcales</taxon>
        <taxon>Prochlorococcaceae</taxon>
        <taxon>Prochlorococcus</taxon>
    </lineage>
</organism>
<evidence type="ECO:0000255" key="1">
    <source>
        <dbReference type="HAMAP-Rule" id="MF_00031"/>
    </source>
</evidence>
<proteinExistence type="inferred from homology"/>
<comment type="function">
    <text evidence="1">The RuvA-RuvB-RuvC complex processes Holliday junction (HJ) DNA during genetic recombination and DNA repair, while the RuvA-RuvB complex plays an important role in the rescue of blocked DNA replication forks via replication fork reversal (RFR). RuvA specifically binds to HJ cruciform DNA, conferring on it an open structure. The RuvB hexamer acts as an ATP-dependent pump, pulling dsDNA into and through the RuvAB complex. HJ branch migration allows RuvC to scan DNA until it finds its consensus sequence, where it cleaves and resolves the cruciform DNA.</text>
</comment>
<comment type="subunit">
    <text evidence="1">Homotetramer. Forms an RuvA(8)-RuvB(12)-Holliday junction (HJ) complex. HJ DNA is sandwiched between 2 RuvA tetramers; dsDNA enters through RuvA and exits via RuvB. An RuvB hexamer assembles on each DNA strand where it exits the tetramer. Each RuvB hexamer is contacted by two RuvA subunits (via domain III) on 2 adjacent RuvB subunits; this complex drives branch migration. In the full resolvosome a probable DNA-RuvA(4)-RuvB(12)-RuvC(2) complex forms which resolves the HJ.</text>
</comment>
<comment type="subcellular location">
    <subcellularLocation>
        <location evidence="1">Cytoplasm</location>
    </subcellularLocation>
</comment>
<comment type="domain">
    <text evidence="1">Has three domains with a flexible linker between the domains II and III and assumes an 'L' shape. Domain III is highly mobile and contacts RuvB.</text>
</comment>
<comment type="similarity">
    <text evidence="1">Belongs to the RuvA family.</text>
</comment>
<name>RUVA_PROM9</name>
<keyword id="KW-0963">Cytoplasm</keyword>
<keyword id="KW-0227">DNA damage</keyword>
<keyword id="KW-0233">DNA recombination</keyword>
<keyword id="KW-0234">DNA repair</keyword>
<keyword id="KW-0238">DNA-binding</keyword>
<protein>
    <recommendedName>
        <fullName evidence="1">Holliday junction branch migration complex subunit RuvA</fullName>
    </recommendedName>
</protein>
<accession>Q31B28</accession>